<protein>
    <recommendedName>
        <fullName evidence="1">Large ribosomal subunit protein uL4</fullName>
    </recommendedName>
    <alternativeName>
        <fullName evidence="3">50S ribosomal protein L4</fullName>
    </alternativeName>
</protein>
<sequence>MQLELLNEQGQAASKVDVPETVFDRQYNEDLIHQIVVAYQANARQGTRAQKDREQVKHSTKKPFKQKGTGNARAGMTSSPLWRGGGRIFPNLPEENFSQKINKKMYRAGMASILSQLAREGRLAVVDSLKLDTPKTKVLADKFKAMNLQSVMVIADEVDENLYLASRNLKNVFVTEPRYADPVSLVHYKKVLVTKGAIDKLKEMFA</sequence>
<accession>B9MB74</accession>
<keyword id="KW-1185">Reference proteome</keyword>
<keyword id="KW-0687">Ribonucleoprotein</keyword>
<keyword id="KW-0689">Ribosomal protein</keyword>
<keyword id="KW-0694">RNA-binding</keyword>
<keyword id="KW-0699">rRNA-binding</keyword>
<comment type="function">
    <text evidence="1">One of the primary rRNA binding proteins, this protein initially binds near the 5'-end of the 23S rRNA. It is important during the early stages of 50S assembly. It makes multiple contacts with different domains of the 23S rRNA in the assembled 50S subunit and ribosome.</text>
</comment>
<comment type="function">
    <text evidence="1">Forms part of the polypeptide exit tunnel.</text>
</comment>
<comment type="subunit">
    <text evidence="1">Part of the 50S ribosomal subunit.</text>
</comment>
<comment type="similarity">
    <text evidence="1">Belongs to the universal ribosomal protein uL4 family.</text>
</comment>
<name>RL4_ACIET</name>
<reference key="1">
    <citation type="submission" date="2009-01" db="EMBL/GenBank/DDBJ databases">
        <title>Complete sequence of Diaphorobacter sp. TPSY.</title>
        <authorList>
            <consortium name="US DOE Joint Genome Institute"/>
            <person name="Lucas S."/>
            <person name="Copeland A."/>
            <person name="Lapidus A."/>
            <person name="Glavina del Rio T."/>
            <person name="Tice H."/>
            <person name="Bruce D."/>
            <person name="Goodwin L."/>
            <person name="Pitluck S."/>
            <person name="Chertkov O."/>
            <person name="Brettin T."/>
            <person name="Detter J.C."/>
            <person name="Han C."/>
            <person name="Larimer F."/>
            <person name="Land M."/>
            <person name="Hauser L."/>
            <person name="Kyrpides N."/>
            <person name="Mikhailova N."/>
            <person name="Coates J.D."/>
        </authorList>
    </citation>
    <scope>NUCLEOTIDE SEQUENCE [LARGE SCALE GENOMIC DNA]</scope>
    <source>
        <strain>TPSY</strain>
    </source>
</reference>
<gene>
    <name evidence="1" type="primary">rplD</name>
    <name type="ordered locus">Dtpsy_0274</name>
</gene>
<proteinExistence type="inferred from homology"/>
<dbReference type="EMBL" id="CP001392">
    <property type="protein sequence ID" value="ACM31758.1"/>
    <property type="molecule type" value="Genomic_DNA"/>
</dbReference>
<dbReference type="RefSeq" id="WP_011803743.1">
    <property type="nucleotide sequence ID" value="NC_011992.1"/>
</dbReference>
<dbReference type="SMR" id="B9MB74"/>
<dbReference type="GeneID" id="84683211"/>
<dbReference type="KEGG" id="dia:Dtpsy_0274"/>
<dbReference type="eggNOG" id="COG0088">
    <property type="taxonomic scope" value="Bacteria"/>
</dbReference>
<dbReference type="HOGENOM" id="CLU_041575_5_2_4"/>
<dbReference type="Proteomes" id="UP000000450">
    <property type="component" value="Chromosome"/>
</dbReference>
<dbReference type="GO" id="GO:1990904">
    <property type="term" value="C:ribonucleoprotein complex"/>
    <property type="evidence" value="ECO:0007669"/>
    <property type="project" value="UniProtKB-KW"/>
</dbReference>
<dbReference type="GO" id="GO:0005840">
    <property type="term" value="C:ribosome"/>
    <property type="evidence" value="ECO:0007669"/>
    <property type="project" value="UniProtKB-KW"/>
</dbReference>
<dbReference type="GO" id="GO:0019843">
    <property type="term" value="F:rRNA binding"/>
    <property type="evidence" value="ECO:0007669"/>
    <property type="project" value="UniProtKB-UniRule"/>
</dbReference>
<dbReference type="GO" id="GO:0003735">
    <property type="term" value="F:structural constituent of ribosome"/>
    <property type="evidence" value="ECO:0007669"/>
    <property type="project" value="InterPro"/>
</dbReference>
<dbReference type="GO" id="GO:0006412">
    <property type="term" value="P:translation"/>
    <property type="evidence" value="ECO:0007669"/>
    <property type="project" value="UniProtKB-UniRule"/>
</dbReference>
<dbReference type="Gene3D" id="3.40.1370.10">
    <property type="match status" value="1"/>
</dbReference>
<dbReference type="HAMAP" id="MF_01328_B">
    <property type="entry name" value="Ribosomal_uL4_B"/>
    <property type="match status" value="1"/>
</dbReference>
<dbReference type="InterPro" id="IPR002136">
    <property type="entry name" value="Ribosomal_uL4"/>
</dbReference>
<dbReference type="InterPro" id="IPR013005">
    <property type="entry name" value="Ribosomal_uL4-like"/>
</dbReference>
<dbReference type="InterPro" id="IPR023574">
    <property type="entry name" value="Ribosomal_uL4_dom_sf"/>
</dbReference>
<dbReference type="NCBIfam" id="TIGR03953">
    <property type="entry name" value="rplD_bact"/>
    <property type="match status" value="1"/>
</dbReference>
<dbReference type="PANTHER" id="PTHR10746">
    <property type="entry name" value="50S RIBOSOMAL PROTEIN L4"/>
    <property type="match status" value="1"/>
</dbReference>
<dbReference type="PANTHER" id="PTHR10746:SF6">
    <property type="entry name" value="LARGE RIBOSOMAL SUBUNIT PROTEIN UL4M"/>
    <property type="match status" value="1"/>
</dbReference>
<dbReference type="Pfam" id="PF00573">
    <property type="entry name" value="Ribosomal_L4"/>
    <property type="match status" value="1"/>
</dbReference>
<dbReference type="SUPFAM" id="SSF52166">
    <property type="entry name" value="Ribosomal protein L4"/>
    <property type="match status" value="1"/>
</dbReference>
<feature type="chain" id="PRO_1000166003" description="Large ribosomal subunit protein uL4">
    <location>
        <begin position="1"/>
        <end position="206"/>
    </location>
</feature>
<feature type="region of interest" description="Disordered" evidence="2">
    <location>
        <begin position="46"/>
        <end position="77"/>
    </location>
</feature>
<organism>
    <name type="scientific">Acidovorax ebreus (strain TPSY)</name>
    <name type="common">Diaphorobacter sp. (strain TPSY)</name>
    <dbReference type="NCBI Taxonomy" id="535289"/>
    <lineage>
        <taxon>Bacteria</taxon>
        <taxon>Pseudomonadati</taxon>
        <taxon>Pseudomonadota</taxon>
        <taxon>Betaproteobacteria</taxon>
        <taxon>Burkholderiales</taxon>
        <taxon>Comamonadaceae</taxon>
        <taxon>Diaphorobacter</taxon>
    </lineage>
</organism>
<evidence type="ECO:0000255" key="1">
    <source>
        <dbReference type="HAMAP-Rule" id="MF_01328"/>
    </source>
</evidence>
<evidence type="ECO:0000256" key="2">
    <source>
        <dbReference type="SAM" id="MobiDB-lite"/>
    </source>
</evidence>
<evidence type="ECO:0000305" key="3"/>